<protein>
    <recommendedName>
        <fullName>Uncharacterized protein in fibril gene 3'region</fullName>
    </recommendedName>
    <alternativeName>
        <fullName>ORF2</fullName>
    </alternativeName>
</protein>
<name>YFIB_SPICI</name>
<reference key="1">
    <citation type="journal article" date="1991" name="J. Bacteriol.">
        <title>Nucleotide sequence of the Spiroplasma citri fibril protein gene.</title>
        <authorList>
            <person name="Williamson D.L."/>
            <person name="Renaudin J."/>
            <person name="Bove J.M."/>
        </authorList>
    </citation>
    <scope>NUCLEOTIDE SEQUENCE [GENOMIC DNA]</scope>
    <source>
        <strain>ATCC 27556 / NCPPB 2647 / R8A2</strain>
    </source>
</reference>
<organism>
    <name type="scientific">Spiroplasma citri</name>
    <dbReference type="NCBI Taxonomy" id="2133"/>
    <lineage>
        <taxon>Bacteria</taxon>
        <taxon>Bacillati</taxon>
        <taxon>Mycoplasmatota</taxon>
        <taxon>Mollicutes</taxon>
        <taxon>Entomoplasmatales</taxon>
        <taxon>Spiroplasmataceae</taxon>
        <taxon>Spiroplasma</taxon>
    </lineage>
</organism>
<proteinExistence type="predicted"/>
<dbReference type="EMBL" id="M62504">
    <property type="protein sequence ID" value="AAA26584.1"/>
    <property type="molecule type" value="Genomic_DNA"/>
</dbReference>
<dbReference type="PIR" id="B43668">
    <property type="entry name" value="B43668"/>
</dbReference>
<dbReference type="STRING" id="2133.SCITRI_00718"/>
<dbReference type="GO" id="GO:0005886">
    <property type="term" value="C:plasma membrane"/>
    <property type="evidence" value="ECO:0007669"/>
    <property type="project" value="UniProtKB-SubCell"/>
</dbReference>
<dbReference type="InterPro" id="IPR051461">
    <property type="entry name" value="UPF0750_membrane"/>
</dbReference>
<dbReference type="InterPro" id="IPR003740">
    <property type="entry name" value="YitT"/>
</dbReference>
<dbReference type="PANTHER" id="PTHR33545:SF5">
    <property type="entry name" value="UPF0750 MEMBRANE PROTEIN YITT"/>
    <property type="match status" value="1"/>
</dbReference>
<dbReference type="PANTHER" id="PTHR33545">
    <property type="entry name" value="UPF0750 MEMBRANE PROTEIN YITT-RELATED"/>
    <property type="match status" value="1"/>
</dbReference>
<dbReference type="Pfam" id="PF02588">
    <property type="entry name" value="YitT_membrane"/>
    <property type="match status" value="1"/>
</dbReference>
<sequence>MVNEEEKDLTAEGDSNNTGVSPDSIKNKTLDFYPKEKTTERKTRSRERISRKEVNLRFKAYLKSRLFRDYAYIIFAAFLGMASYDYFIAATTSNGITPSGIGGVARGIAVGIWPNQDQLQMQTSMYWVFYFVFNIPLFIFGVIKIGIRFSFRTIVYIGLQNGFHFAFAYIPVINPQELFFIVNYNSLNIFSNYGGMYQIWLFVFAAVAGILNGIAYGLVYKGGASTAGTDFVFAYYSAKKKISIANYNRIVNYIIIVVMLAIHTTLLSRSELTSIYFGKYWAANIEQIQRLGFKIDDGGLYDSDFTSHKIKYFFGPALFASYLFVVVQAITIDIIFPKFKYRSLMVITSKADAVVSGLQYVHYPNDIIRLPARD</sequence>
<comment type="subcellular location">
    <subcellularLocation>
        <location evidence="3">Cell membrane</location>
        <topology evidence="3">Multi-pass membrane protein</topology>
    </subcellularLocation>
</comment>
<comment type="similarity">
    <text evidence="3">To M.genitalium MG432 and MG443.</text>
</comment>
<keyword id="KW-1003">Cell membrane</keyword>
<keyword id="KW-0472">Membrane</keyword>
<keyword id="KW-0812">Transmembrane</keyword>
<keyword id="KW-1133">Transmembrane helix</keyword>
<accession>P27712</accession>
<evidence type="ECO:0000255" key="1"/>
<evidence type="ECO:0000256" key="2">
    <source>
        <dbReference type="SAM" id="MobiDB-lite"/>
    </source>
</evidence>
<evidence type="ECO:0000305" key="3"/>
<feature type="chain" id="PRO_0000066211" description="Uncharacterized protein in fibril gene 3'region">
    <location>
        <begin position="1"/>
        <end position="374" status="greater than"/>
    </location>
</feature>
<feature type="transmembrane region" description="Helical" evidence="1">
    <location>
        <begin position="70"/>
        <end position="90"/>
    </location>
</feature>
<feature type="transmembrane region" description="Helical" evidence="1">
    <location>
        <begin position="127"/>
        <end position="147"/>
    </location>
</feature>
<feature type="transmembrane region" description="Helical" evidence="1">
    <location>
        <begin position="153"/>
        <end position="173"/>
    </location>
</feature>
<feature type="transmembrane region" description="Helical" evidence="1">
    <location>
        <begin position="199"/>
        <end position="219"/>
    </location>
</feature>
<feature type="transmembrane region" description="Helical" evidence="1">
    <location>
        <begin position="242"/>
        <end position="262"/>
    </location>
</feature>
<feature type="transmembrane region" description="Helical" evidence="1">
    <location>
        <begin position="312"/>
        <end position="332"/>
    </location>
</feature>
<feature type="region of interest" description="Disordered" evidence="2">
    <location>
        <begin position="1"/>
        <end position="46"/>
    </location>
</feature>
<feature type="compositionally biased region" description="Basic and acidic residues" evidence="2">
    <location>
        <begin position="25"/>
        <end position="46"/>
    </location>
</feature>
<feature type="non-terminal residue">
    <location>
        <position position="374"/>
    </location>
</feature>